<dbReference type="EC" id="5.3.1.16" evidence="1"/>
<dbReference type="EMBL" id="CP000227">
    <property type="protein sequence ID" value="ACM11910.1"/>
    <property type="molecule type" value="Genomic_DNA"/>
</dbReference>
<dbReference type="SMR" id="B9IUZ9"/>
<dbReference type="KEGG" id="bcq:BCQ_1482"/>
<dbReference type="HOGENOM" id="CLU_048577_1_1_9"/>
<dbReference type="UniPathway" id="UPA00031">
    <property type="reaction ID" value="UER00009"/>
</dbReference>
<dbReference type="Proteomes" id="UP000000441">
    <property type="component" value="Chromosome"/>
</dbReference>
<dbReference type="GO" id="GO:0005737">
    <property type="term" value="C:cytoplasm"/>
    <property type="evidence" value="ECO:0007669"/>
    <property type="project" value="UniProtKB-SubCell"/>
</dbReference>
<dbReference type="GO" id="GO:0003949">
    <property type="term" value="F:1-(5-phosphoribosyl)-5-[(5-phosphoribosylamino)methylideneamino]imidazole-4-carboxamide isomerase activity"/>
    <property type="evidence" value="ECO:0007669"/>
    <property type="project" value="UniProtKB-UniRule"/>
</dbReference>
<dbReference type="GO" id="GO:0000105">
    <property type="term" value="P:L-histidine biosynthetic process"/>
    <property type="evidence" value="ECO:0007669"/>
    <property type="project" value="UniProtKB-UniRule"/>
</dbReference>
<dbReference type="GO" id="GO:0000162">
    <property type="term" value="P:L-tryptophan biosynthetic process"/>
    <property type="evidence" value="ECO:0007669"/>
    <property type="project" value="TreeGrafter"/>
</dbReference>
<dbReference type="CDD" id="cd04732">
    <property type="entry name" value="HisA"/>
    <property type="match status" value="1"/>
</dbReference>
<dbReference type="FunFam" id="3.20.20.70:FF:000009">
    <property type="entry name" value="1-(5-phosphoribosyl)-5-[(5-phosphoribosylamino)methylideneamino] imidazole-4-carboxamide isomerase"/>
    <property type="match status" value="1"/>
</dbReference>
<dbReference type="Gene3D" id="3.20.20.70">
    <property type="entry name" value="Aldolase class I"/>
    <property type="match status" value="1"/>
</dbReference>
<dbReference type="HAMAP" id="MF_01014">
    <property type="entry name" value="HisA"/>
    <property type="match status" value="1"/>
</dbReference>
<dbReference type="InterPro" id="IPR013785">
    <property type="entry name" value="Aldolase_TIM"/>
</dbReference>
<dbReference type="InterPro" id="IPR006062">
    <property type="entry name" value="His_biosynth"/>
</dbReference>
<dbReference type="InterPro" id="IPR006063">
    <property type="entry name" value="HisA_bact_arch"/>
</dbReference>
<dbReference type="InterPro" id="IPR044524">
    <property type="entry name" value="Isoase_HisA-like"/>
</dbReference>
<dbReference type="InterPro" id="IPR023016">
    <property type="entry name" value="Isoase_HisA-like_bact"/>
</dbReference>
<dbReference type="InterPro" id="IPR011060">
    <property type="entry name" value="RibuloseP-bd_barrel"/>
</dbReference>
<dbReference type="NCBIfam" id="TIGR00007">
    <property type="entry name" value="1-(5-phosphoribosyl)-5-[(5-phosphoribosylamino)methylideneamino]imidazole-4-carboxamide isomerase"/>
    <property type="match status" value="1"/>
</dbReference>
<dbReference type="PANTHER" id="PTHR43090">
    <property type="entry name" value="1-(5-PHOSPHORIBOSYL)-5-[(5-PHOSPHORIBOSYLAMINO)METHYLIDENEAMINO] IMIDAZOLE-4-CARBOXAMIDE ISOMERASE"/>
    <property type="match status" value="1"/>
</dbReference>
<dbReference type="PANTHER" id="PTHR43090:SF2">
    <property type="entry name" value="1-(5-PHOSPHORIBOSYL)-5-[(5-PHOSPHORIBOSYLAMINO)METHYLIDENEAMINO] IMIDAZOLE-4-CARBOXAMIDE ISOMERASE"/>
    <property type="match status" value="1"/>
</dbReference>
<dbReference type="Pfam" id="PF00977">
    <property type="entry name" value="His_biosynth"/>
    <property type="match status" value="1"/>
</dbReference>
<dbReference type="SUPFAM" id="SSF51366">
    <property type="entry name" value="Ribulose-phoshate binding barrel"/>
    <property type="match status" value="1"/>
</dbReference>
<feature type="chain" id="PRO_1000148952" description="1-(5-phosphoribosyl)-5-[(5-phosphoribosylamino)methylideneamino] imidazole-4-carboxamide isomerase">
    <location>
        <begin position="1"/>
        <end position="239"/>
    </location>
</feature>
<feature type="active site" description="Proton acceptor" evidence="1">
    <location>
        <position position="8"/>
    </location>
</feature>
<feature type="active site" description="Proton donor" evidence="1">
    <location>
        <position position="129"/>
    </location>
</feature>
<keyword id="KW-0028">Amino-acid biosynthesis</keyword>
<keyword id="KW-0963">Cytoplasm</keyword>
<keyword id="KW-0368">Histidine biosynthesis</keyword>
<keyword id="KW-0413">Isomerase</keyword>
<reference key="1">
    <citation type="journal article" date="2009" name="J. Bacteriol.">
        <title>Complete genome sequence of the extremophilic Bacillus cereus strain Q1 with industrial applications.</title>
        <authorList>
            <person name="Xiong Z."/>
            <person name="Jiang Y."/>
            <person name="Qi D."/>
            <person name="Lu H."/>
            <person name="Yang F."/>
            <person name="Yang J."/>
            <person name="Chen L."/>
            <person name="Sun L."/>
            <person name="Xu X."/>
            <person name="Xue Y."/>
            <person name="Zhu Y."/>
            <person name="Jin Q."/>
        </authorList>
    </citation>
    <scope>NUCLEOTIDE SEQUENCE [LARGE SCALE GENOMIC DNA]</scope>
    <source>
        <strain>Q1</strain>
    </source>
</reference>
<comment type="catalytic activity">
    <reaction evidence="1">
        <text>1-(5-phospho-beta-D-ribosyl)-5-[(5-phospho-beta-D-ribosylamino)methylideneamino]imidazole-4-carboxamide = 5-[(5-phospho-1-deoxy-D-ribulos-1-ylimino)methylamino]-1-(5-phospho-beta-D-ribosyl)imidazole-4-carboxamide</text>
        <dbReference type="Rhea" id="RHEA:15469"/>
        <dbReference type="ChEBI" id="CHEBI:58435"/>
        <dbReference type="ChEBI" id="CHEBI:58525"/>
        <dbReference type="EC" id="5.3.1.16"/>
    </reaction>
</comment>
<comment type="pathway">
    <text evidence="1">Amino-acid biosynthesis; L-histidine biosynthesis; L-histidine from 5-phospho-alpha-D-ribose 1-diphosphate: step 4/9.</text>
</comment>
<comment type="subcellular location">
    <subcellularLocation>
        <location evidence="1">Cytoplasm</location>
    </subcellularLocation>
</comment>
<comment type="similarity">
    <text evidence="1">Belongs to the HisA/HisF family.</text>
</comment>
<gene>
    <name evidence="1" type="primary">hisA</name>
    <name type="ordered locus">BCQ_1482</name>
</gene>
<organism>
    <name type="scientific">Bacillus cereus (strain Q1)</name>
    <dbReference type="NCBI Taxonomy" id="361100"/>
    <lineage>
        <taxon>Bacteria</taxon>
        <taxon>Bacillati</taxon>
        <taxon>Bacillota</taxon>
        <taxon>Bacilli</taxon>
        <taxon>Bacillales</taxon>
        <taxon>Bacillaceae</taxon>
        <taxon>Bacillus</taxon>
        <taxon>Bacillus cereus group</taxon>
    </lineage>
</organism>
<name>HIS4_BACCQ</name>
<accession>B9IUZ9</accession>
<evidence type="ECO:0000255" key="1">
    <source>
        <dbReference type="HAMAP-Rule" id="MF_01014"/>
    </source>
</evidence>
<sequence length="239" mass="26204">MEIFPAIDLKEGRCVRLYQGEFSKETVMNEDPVAQAIIFETFGAKRLHIVDLDGAVAGESLNLSVIERICKAVRIPVQVGGGIRSLVSVEKLFSVGVDKVILGTAALYDKPFLEETVRLYKEKIIVGIDAKNGFVATRGWLDVSEISYIDLAKQMEKIGVQTIVFTDISKDGTLAGPNVEQLELLQKNVATRVIASGGIASIQDVKKLNDMNIYGVIIGKALYEKTIDLEEVLEVTKLC</sequence>
<proteinExistence type="inferred from homology"/>
<protein>
    <recommendedName>
        <fullName evidence="1">1-(5-phosphoribosyl)-5-[(5-phosphoribosylamino)methylideneamino] imidazole-4-carboxamide isomerase</fullName>
        <ecNumber evidence="1">5.3.1.16</ecNumber>
    </recommendedName>
    <alternativeName>
        <fullName evidence="1">Phosphoribosylformimino-5-aminoimidazole carboxamide ribotide isomerase</fullName>
    </alternativeName>
</protein>